<name>VP35L_DANRE</name>
<gene>
    <name type="primary">vps35l</name>
    <name type="ORF">zgc:163107</name>
</gene>
<keyword id="KW-0967">Endosome</keyword>
<keyword id="KW-0653">Protein transport</keyword>
<keyword id="KW-1185">Reference proteome</keyword>
<keyword id="KW-0813">Transport</keyword>
<protein>
    <recommendedName>
        <fullName evidence="3">VPS35 endosomal protein-sorting factor-like</fullName>
    </recommendedName>
</protein>
<feature type="chain" id="PRO_0000311356" description="VPS35 endosomal protein-sorting factor-like">
    <location>
        <begin position="1"/>
        <end position="963"/>
    </location>
</feature>
<feature type="region of interest" description="Disordered" evidence="2">
    <location>
        <begin position="38"/>
        <end position="71"/>
    </location>
</feature>
<feature type="region of interest" description="Disordered" evidence="2">
    <location>
        <begin position="85"/>
        <end position="111"/>
    </location>
</feature>
<feature type="compositionally biased region" description="Low complexity" evidence="2">
    <location>
        <begin position="52"/>
        <end position="63"/>
    </location>
</feature>
<proteinExistence type="evidence at transcript level"/>
<reference key="1">
    <citation type="submission" date="2007-04" db="EMBL/GenBank/DDBJ databases">
        <authorList>
            <consortium name="NIH - Zebrafish Gene Collection (ZGC) project"/>
        </authorList>
    </citation>
    <scope>NUCLEOTIDE SEQUENCE [LARGE SCALE MRNA]</scope>
    <source>
        <tissue>Embryo</tissue>
    </source>
</reference>
<organism>
    <name type="scientific">Danio rerio</name>
    <name type="common">Zebrafish</name>
    <name type="synonym">Brachydanio rerio</name>
    <dbReference type="NCBI Taxonomy" id="7955"/>
    <lineage>
        <taxon>Eukaryota</taxon>
        <taxon>Metazoa</taxon>
        <taxon>Chordata</taxon>
        <taxon>Craniata</taxon>
        <taxon>Vertebrata</taxon>
        <taxon>Euteleostomi</taxon>
        <taxon>Actinopterygii</taxon>
        <taxon>Neopterygii</taxon>
        <taxon>Teleostei</taxon>
        <taxon>Ostariophysi</taxon>
        <taxon>Cypriniformes</taxon>
        <taxon>Danionidae</taxon>
        <taxon>Danioninae</taxon>
        <taxon>Danio</taxon>
    </lineage>
</organism>
<dbReference type="EMBL" id="BC139716">
    <property type="protein sequence ID" value="AAI39717.1"/>
    <property type="molecule type" value="mRNA"/>
</dbReference>
<dbReference type="RefSeq" id="NP_001091651.1">
    <property type="nucleotide sequence ID" value="NM_001098181.1"/>
</dbReference>
<dbReference type="SMR" id="A4VCH4"/>
<dbReference type="FunCoup" id="A4VCH4">
    <property type="interactions" value="2307"/>
</dbReference>
<dbReference type="STRING" id="7955.ENSDARP00000052536"/>
<dbReference type="PaxDb" id="7955-ENSDARP00000052536"/>
<dbReference type="PeptideAtlas" id="A4VCH4"/>
<dbReference type="Ensembl" id="ENSDART00000052537">
    <property type="protein sequence ID" value="ENSDARP00000052536"/>
    <property type="gene ID" value="ENSDARG00000020041"/>
</dbReference>
<dbReference type="GeneID" id="563454"/>
<dbReference type="KEGG" id="dre:563454"/>
<dbReference type="AGR" id="ZFIN:ZDB-GENE-070521-7"/>
<dbReference type="CTD" id="57020"/>
<dbReference type="ZFIN" id="ZDB-GENE-070521-7">
    <property type="gene designation" value="vps35l"/>
</dbReference>
<dbReference type="eggNOG" id="KOG3682">
    <property type="taxonomic scope" value="Eukaryota"/>
</dbReference>
<dbReference type="HOGENOM" id="CLU_012270_0_0_1"/>
<dbReference type="InParanoid" id="A4VCH4"/>
<dbReference type="OMA" id="RVEVCKN"/>
<dbReference type="OrthoDB" id="1734063at2759"/>
<dbReference type="PhylomeDB" id="A4VCH4"/>
<dbReference type="TreeFam" id="TF324367"/>
<dbReference type="Reactome" id="R-DRE-6798695">
    <property type="pathway name" value="Neutrophil degranulation"/>
</dbReference>
<dbReference type="PRO" id="PR:A4VCH4"/>
<dbReference type="Proteomes" id="UP000000437">
    <property type="component" value="Chromosome 12"/>
</dbReference>
<dbReference type="Bgee" id="ENSDARG00000020041">
    <property type="expression patterns" value="Expressed in testis and 23 other cell types or tissues"/>
</dbReference>
<dbReference type="GO" id="GO:0005768">
    <property type="term" value="C:endosome"/>
    <property type="evidence" value="ECO:0000250"/>
    <property type="project" value="UniProtKB"/>
</dbReference>
<dbReference type="GO" id="GO:0032456">
    <property type="term" value="P:endocytic recycling"/>
    <property type="evidence" value="ECO:0000250"/>
    <property type="project" value="UniProtKB"/>
</dbReference>
<dbReference type="GO" id="GO:0015031">
    <property type="term" value="P:protein transport"/>
    <property type="evidence" value="ECO:0007669"/>
    <property type="project" value="UniProtKB-KW"/>
</dbReference>
<dbReference type="InterPro" id="IPR029705">
    <property type="entry name" value="VPS35L"/>
</dbReference>
<dbReference type="PANTHER" id="PTHR13673">
    <property type="entry name" value="ESOPHAGEAL CANCER ASSOCIATED PROTEIN"/>
    <property type="match status" value="1"/>
</dbReference>
<dbReference type="PANTHER" id="PTHR13673:SF0">
    <property type="entry name" value="VPS35 ENDOSOMAL PROTEIN-SORTING FACTOR-LIKE"/>
    <property type="match status" value="1"/>
</dbReference>
<accession>A4VCH4</accession>
<evidence type="ECO:0000250" key="1">
    <source>
        <dbReference type="UniProtKB" id="Q7Z3J2"/>
    </source>
</evidence>
<evidence type="ECO:0000256" key="2">
    <source>
        <dbReference type="SAM" id="MobiDB-lite"/>
    </source>
</evidence>
<evidence type="ECO:0000305" key="3"/>
<sequence>MASVQWHSRSRKYDSEWQASRLEVSAVEFSDYHPLKAITVTDSKSRRGGRKGSTSSSSSSSSSVAPDPLSSMLDGTDPLSLFAAASETPTLPHSVSAGELGRKRKEKEEEVGLDFEPWSSKRGEILSRFTTTEKLSINLFMGSDTSKASSPSSAVSEKVRTRLEELDDLEEGSQRELLNLSQQDYVNRIEELNQSLKEAWGSDQKVKALKIVIQCSKLLSDTSVIQFYPSKFVLITDILDTFGGLVYDRIWSMCADPHPLPESFSADDVNDTAKETCLNWFFKIASIRELVPRLYVEAALLKCNRFLTKCGIQETLQRLTAMIRGIGDPLVAVYARAYLCRVGMEVAPHLKDSLNKNFFDLLASFRQIHGDSVQNQLVLQRVEIPVYLTLYSPAINWILQCVAYRAPEVLLTEMMDRCKKLGNNALLLNSVMWAFRAEFVATRATDFIGMIKDCDEAGFPKHLLFASLGRSLSCADPPESERLSILNEAWKVITKVRSPRDYINCAEIWVEFTCRHFTKREVNTVLADIIKHMTPDRAFEDAYPQLQSVIKKILTYFHDFSMLFSMEKFLPFLDMFQKDSVRVEVCKSIMEVFIKHQQEPTRDPVILNALLHICKTMHDSVNALTLDDEKRSLALLINGFIRMVSFGRDFEQQLSFCVEARATFCNLEPVIIHLIHTVNQLAMETGRVMKGNHSRKTAAFVRACAAYSFITIPSLTNIFSRLNLYLLSGQVALANQCLSQADAFLKAAVSILPEVPRSISIEGKQRSSESFLLDFINNFLSTLLVVPDHPEQGVLYLVRGLLNMVQDYTWEDNSDAKVRVYISALPLLAAMSQESYLYTIPKVDSNETLYGGDPKFIAEINKLCETLIGQVLDHLKSLGRDEEVRRQGSLAFSLFGCLLAHGDLRNNKLNQLAVNLWNLSHKHGICDTRTSVRTLEHIKHQAQQTDMSHFSDMTARLSLQSRA</sequence>
<comment type="function">
    <text evidence="1">Acts as a component of the retriever complex. The retriever complex is a heterotrimeric complex related to retromer cargo-selective complex (CSC) and essential for retromer-independent retrieval and recycling of numerous cargos such as integrins. The recruitment of the retriever complex to the endosomal membrane involves CCC and WASH complexes. In the endosomes, drives the retrieval and recycling of NxxY-motif-containing cargo proteins by coupling to SNX17, a cargo essential for the homeostatic maintenance of numerous cell surface proteins associated with processes that include cell migration, cell adhesion, nutrient supply and cell signaling. May be involved in copper-dependent atp7a trafficking between the trans-Golgi network and vesicles in the cell periphery.</text>
</comment>
<comment type="subunit">
    <text evidence="1">Component of the heterotrimeric retriever complex.</text>
</comment>
<comment type="subcellular location">
    <subcellularLocation>
        <location evidence="1">Endosome</location>
    </subcellularLocation>
</comment>
<comment type="similarity">
    <text evidence="3">Belongs to the VPS35L family.</text>
</comment>